<keyword id="KW-0238">DNA-binding</keyword>
<keyword id="KW-0371">Homeobox</keyword>
<keyword id="KW-0440">LIM domain</keyword>
<keyword id="KW-0479">Metal-binding</keyword>
<keyword id="KW-0539">Nucleus</keyword>
<keyword id="KW-1185">Reference proteome</keyword>
<keyword id="KW-0677">Repeat</keyword>
<keyword id="KW-0862">Zinc</keyword>
<organism>
    <name type="scientific">Xenopus laevis</name>
    <name type="common">African clawed frog</name>
    <dbReference type="NCBI Taxonomy" id="8355"/>
    <lineage>
        <taxon>Eukaryota</taxon>
        <taxon>Metazoa</taxon>
        <taxon>Chordata</taxon>
        <taxon>Craniata</taxon>
        <taxon>Vertebrata</taxon>
        <taxon>Euteleostomi</taxon>
        <taxon>Amphibia</taxon>
        <taxon>Batrachia</taxon>
        <taxon>Anura</taxon>
        <taxon>Pipoidea</taxon>
        <taxon>Pipidae</taxon>
        <taxon>Xenopodinae</taxon>
        <taxon>Xenopus</taxon>
        <taxon>Xenopus</taxon>
    </lineage>
</organism>
<protein>
    <recommendedName>
        <fullName>LIM/homeobox protein Lhx9</fullName>
        <shortName>LIM homeobox protein 9</shortName>
    </recommendedName>
</protein>
<dbReference type="EMBL" id="BC080067">
    <property type="protein sequence ID" value="AAH80067.1"/>
    <property type="molecule type" value="mRNA"/>
</dbReference>
<dbReference type="RefSeq" id="NP_001087527.1">
    <property type="nucleotide sequence ID" value="NM_001094058.1"/>
</dbReference>
<dbReference type="BMRB" id="Q68EY3"/>
<dbReference type="SMR" id="Q68EY3"/>
<dbReference type="DNASU" id="447351"/>
<dbReference type="GeneID" id="447351"/>
<dbReference type="KEGG" id="xla:447351"/>
<dbReference type="AGR" id="Xenbase:XB-GENE-866119"/>
<dbReference type="CTD" id="447351"/>
<dbReference type="Xenbase" id="XB-GENE-866119">
    <property type="gene designation" value="lhx9.S"/>
</dbReference>
<dbReference type="OrthoDB" id="9990008at2759"/>
<dbReference type="Proteomes" id="UP000186698">
    <property type="component" value="Chromosome 4S"/>
</dbReference>
<dbReference type="Bgee" id="447351">
    <property type="expression patterns" value="Expressed in brain and 4 other cell types or tissues"/>
</dbReference>
<dbReference type="GO" id="GO:0005634">
    <property type="term" value="C:nucleus"/>
    <property type="evidence" value="ECO:0000318"/>
    <property type="project" value="GO_Central"/>
</dbReference>
<dbReference type="GO" id="GO:0000981">
    <property type="term" value="F:DNA-binding transcription factor activity, RNA polymerase II-specific"/>
    <property type="evidence" value="ECO:0000318"/>
    <property type="project" value="GO_Central"/>
</dbReference>
<dbReference type="GO" id="GO:0046872">
    <property type="term" value="F:metal ion binding"/>
    <property type="evidence" value="ECO:0007669"/>
    <property type="project" value="UniProtKB-KW"/>
</dbReference>
<dbReference type="GO" id="GO:0000977">
    <property type="term" value="F:RNA polymerase II transcription regulatory region sequence-specific DNA binding"/>
    <property type="evidence" value="ECO:0000318"/>
    <property type="project" value="GO_Central"/>
</dbReference>
<dbReference type="GO" id="GO:0097380">
    <property type="term" value="P:dorsal spinal cord interneuron anterior axon guidance"/>
    <property type="evidence" value="ECO:0000250"/>
    <property type="project" value="UniProtKB"/>
</dbReference>
<dbReference type="GO" id="GO:0045892">
    <property type="term" value="P:negative regulation of DNA-templated transcription"/>
    <property type="evidence" value="ECO:0000250"/>
    <property type="project" value="UniProtKB"/>
</dbReference>
<dbReference type="GO" id="GO:0030182">
    <property type="term" value="P:neuron differentiation"/>
    <property type="evidence" value="ECO:0000318"/>
    <property type="project" value="GO_Central"/>
</dbReference>
<dbReference type="GO" id="GO:0006357">
    <property type="term" value="P:regulation of transcription by RNA polymerase II"/>
    <property type="evidence" value="ECO:0000318"/>
    <property type="project" value="GO_Central"/>
</dbReference>
<dbReference type="CDD" id="cd00086">
    <property type="entry name" value="homeodomain"/>
    <property type="match status" value="1"/>
</dbReference>
<dbReference type="CDD" id="cd09469">
    <property type="entry name" value="LIM1_Lhx2"/>
    <property type="match status" value="1"/>
</dbReference>
<dbReference type="CDD" id="cd09377">
    <property type="entry name" value="LIM2_Lhx2_Lhx9"/>
    <property type="match status" value="1"/>
</dbReference>
<dbReference type="FunFam" id="1.10.10.60:FF:000027">
    <property type="entry name" value="LIM/homeobox protein Lhx9"/>
    <property type="match status" value="1"/>
</dbReference>
<dbReference type="FunFam" id="2.10.110.10:FF:000039">
    <property type="entry name" value="LIM/homeobox protein Lhx9 isoform 2"/>
    <property type="match status" value="1"/>
</dbReference>
<dbReference type="FunFam" id="2.10.110.10:FF:000033">
    <property type="entry name" value="LIM/homeobox protein Lhx9 isoform X2"/>
    <property type="match status" value="1"/>
</dbReference>
<dbReference type="Gene3D" id="2.10.110.10">
    <property type="entry name" value="Cysteine Rich Protein"/>
    <property type="match status" value="2"/>
</dbReference>
<dbReference type="Gene3D" id="1.10.10.60">
    <property type="entry name" value="Homeodomain-like"/>
    <property type="match status" value="1"/>
</dbReference>
<dbReference type="InterPro" id="IPR001356">
    <property type="entry name" value="HD"/>
</dbReference>
<dbReference type="InterPro" id="IPR009057">
    <property type="entry name" value="Homeodomain-like_sf"/>
</dbReference>
<dbReference type="InterPro" id="IPR050453">
    <property type="entry name" value="LIM_Homeobox_TF"/>
</dbReference>
<dbReference type="InterPro" id="IPR001781">
    <property type="entry name" value="Znf_LIM"/>
</dbReference>
<dbReference type="PANTHER" id="PTHR24208">
    <property type="entry name" value="LIM/HOMEOBOX PROTEIN LHX"/>
    <property type="match status" value="1"/>
</dbReference>
<dbReference type="PANTHER" id="PTHR24208:SF95">
    <property type="entry name" value="LIM_HOMEOBOX PROTEIN LHX9"/>
    <property type="match status" value="1"/>
</dbReference>
<dbReference type="Pfam" id="PF00046">
    <property type="entry name" value="Homeodomain"/>
    <property type="match status" value="1"/>
</dbReference>
<dbReference type="Pfam" id="PF00412">
    <property type="entry name" value="LIM"/>
    <property type="match status" value="2"/>
</dbReference>
<dbReference type="SMART" id="SM00389">
    <property type="entry name" value="HOX"/>
    <property type="match status" value="1"/>
</dbReference>
<dbReference type="SMART" id="SM00132">
    <property type="entry name" value="LIM"/>
    <property type="match status" value="2"/>
</dbReference>
<dbReference type="SUPFAM" id="SSF57716">
    <property type="entry name" value="Glucocorticoid receptor-like (DNA-binding domain)"/>
    <property type="match status" value="2"/>
</dbReference>
<dbReference type="SUPFAM" id="SSF46689">
    <property type="entry name" value="Homeodomain-like"/>
    <property type="match status" value="1"/>
</dbReference>
<dbReference type="PROSITE" id="PS50071">
    <property type="entry name" value="HOMEOBOX_2"/>
    <property type="match status" value="1"/>
</dbReference>
<dbReference type="PROSITE" id="PS00478">
    <property type="entry name" value="LIM_DOMAIN_1"/>
    <property type="match status" value="2"/>
</dbReference>
<dbReference type="PROSITE" id="PS50023">
    <property type="entry name" value="LIM_DOMAIN_2"/>
    <property type="match status" value="2"/>
</dbReference>
<gene>
    <name type="primary">lhx9</name>
</gene>
<proteinExistence type="evidence at transcript level"/>
<sequence length="331" mass="37436">MEIVGCRADESAYPFRPAAAMLFHGITGGHIQGIMEEMERRSKSADSRLAKSIQVNSRETRMPSLNPEKPTLCAGCGGKISDRYYLLAVDKQWHLRCLKCCECKLTLESELTCFAKDGSIYCKEDYYRFSVKRCARCHLGISASEMVMRARESVYHLSCFTCTTCNKTLSTGDQFGMKENLVYCRIHFELLVQGDFHQQLNYTELSAKGGGIAALPYFSNGTGTVQKGRPRKRKSPALGVDIMNYSSGCNENETDLDRDQTYPPSQKTKRMRTSFKHHQLRTMKSYFAINHNPDAKDLKQLAQKTGLTKRVLQGEQCSGFNSHTTRRLKIP</sequence>
<evidence type="ECO:0000250" key="1"/>
<evidence type="ECO:0000255" key="2">
    <source>
        <dbReference type="PROSITE-ProRule" id="PRU00108"/>
    </source>
</evidence>
<evidence type="ECO:0000255" key="3">
    <source>
        <dbReference type="PROSITE-ProRule" id="PRU00125"/>
    </source>
</evidence>
<evidence type="ECO:0000256" key="4">
    <source>
        <dbReference type="SAM" id="MobiDB-lite"/>
    </source>
</evidence>
<feature type="chain" id="PRO_0000364233" description="LIM/homeobox protein Lhx9">
    <location>
        <begin position="1"/>
        <end position="331"/>
    </location>
</feature>
<feature type="domain" description="LIM zinc-binding 1" evidence="3">
    <location>
        <begin position="71"/>
        <end position="132"/>
    </location>
</feature>
<feature type="domain" description="LIM zinc-binding 2" evidence="3">
    <location>
        <begin position="133"/>
        <end position="194"/>
    </location>
</feature>
<feature type="DNA-binding region" description="Homeobox" evidence="2">
    <location>
        <begin position="268"/>
        <end position="327"/>
    </location>
</feature>
<feature type="region of interest" description="Disordered" evidence="4">
    <location>
        <begin position="253"/>
        <end position="275"/>
    </location>
</feature>
<reference key="1">
    <citation type="submission" date="2004-08" db="EMBL/GenBank/DDBJ databases">
        <authorList>
            <consortium name="NIH - Xenopus Gene Collection (XGC) project"/>
        </authorList>
    </citation>
    <scope>NUCLEOTIDE SEQUENCE [LARGE SCALE MRNA]</scope>
    <source>
        <tissue>Eye</tissue>
    </source>
</reference>
<accession>Q68EY3</accession>
<name>LHX9_XENLA</name>
<comment type="function">
    <text evidence="1">May be involved in gonadal development.</text>
</comment>
<comment type="subcellular location">
    <subcellularLocation>
        <location evidence="2">Nucleus</location>
    </subcellularLocation>
</comment>